<dbReference type="EC" id="3.4.11.18" evidence="1"/>
<dbReference type="EMBL" id="DS995701">
    <property type="protein sequence ID" value="EEQ28430.1"/>
    <property type="molecule type" value="Genomic_DNA"/>
</dbReference>
<dbReference type="RefSeq" id="XP_002851214.1">
    <property type="nucleotide sequence ID" value="XM_002851168.1"/>
</dbReference>
<dbReference type="SMR" id="C5FF46"/>
<dbReference type="STRING" id="554155.C5FF46"/>
<dbReference type="GeneID" id="9228835"/>
<dbReference type="VEuPathDB" id="FungiDB:MCYG_01318"/>
<dbReference type="eggNOG" id="KOG2775">
    <property type="taxonomic scope" value="Eukaryota"/>
</dbReference>
<dbReference type="HOGENOM" id="CLU_015857_7_1_1"/>
<dbReference type="OMA" id="PFAKRWL"/>
<dbReference type="OrthoDB" id="7848262at2759"/>
<dbReference type="Proteomes" id="UP000002035">
    <property type="component" value="Unassembled WGS sequence"/>
</dbReference>
<dbReference type="GO" id="GO:0005737">
    <property type="term" value="C:cytoplasm"/>
    <property type="evidence" value="ECO:0007669"/>
    <property type="project" value="UniProtKB-SubCell"/>
</dbReference>
<dbReference type="GO" id="GO:0004239">
    <property type="term" value="F:initiator methionyl aminopeptidase activity"/>
    <property type="evidence" value="ECO:0007669"/>
    <property type="project" value="UniProtKB-UniRule"/>
</dbReference>
<dbReference type="GO" id="GO:0046872">
    <property type="term" value="F:metal ion binding"/>
    <property type="evidence" value="ECO:0007669"/>
    <property type="project" value="UniProtKB-UniRule"/>
</dbReference>
<dbReference type="GO" id="GO:0070006">
    <property type="term" value="F:metalloaminopeptidase activity"/>
    <property type="evidence" value="ECO:0007669"/>
    <property type="project" value="UniProtKB-UniRule"/>
</dbReference>
<dbReference type="GO" id="GO:0006508">
    <property type="term" value="P:proteolysis"/>
    <property type="evidence" value="ECO:0007669"/>
    <property type="project" value="UniProtKB-KW"/>
</dbReference>
<dbReference type="CDD" id="cd01088">
    <property type="entry name" value="MetAP2"/>
    <property type="match status" value="1"/>
</dbReference>
<dbReference type="Gene3D" id="3.90.230.10">
    <property type="entry name" value="Creatinase/methionine aminopeptidase superfamily"/>
    <property type="match status" value="1"/>
</dbReference>
<dbReference type="Gene3D" id="1.10.10.10">
    <property type="entry name" value="Winged helix-like DNA-binding domain superfamily/Winged helix DNA-binding domain"/>
    <property type="match status" value="1"/>
</dbReference>
<dbReference type="HAMAP" id="MF_03175">
    <property type="entry name" value="MetAP_2_euk"/>
    <property type="match status" value="1"/>
</dbReference>
<dbReference type="InterPro" id="IPR036005">
    <property type="entry name" value="Creatinase/aminopeptidase-like"/>
</dbReference>
<dbReference type="InterPro" id="IPR050247">
    <property type="entry name" value="Met_Aminopeptidase_Type2"/>
</dbReference>
<dbReference type="InterPro" id="IPR000994">
    <property type="entry name" value="Pept_M24"/>
</dbReference>
<dbReference type="InterPro" id="IPR001714">
    <property type="entry name" value="Pept_M24_MAP"/>
</dbReference>
<dbReference type="InterPro" id="IPR002468">
    <property type="entry name" value="Pept_M24A_MAP2"/>
</dbReference>
<dbReference type="InterPro" id="IPR018349">
    <property type="entry name" value="Pept_M24A_MAP2_BS"/>
</dbReference>
<dbReference type="InterPro" id="IPR036388">
    <property type="entry name" value="WH-like_DNA-bd_sf"/>
</dbReference>
<dbReference type="InterPro" id="IPR036390">
    <property type="entry name" value="WH_DNA-bd_sf"/>
</dbReference>
<dbReference type="NCBIfam" id="TIGR00501">
    <property type="entry name" value="met_pdase_II"/>
    <property type="match status" value="1"/>
</dbReference>
<dbReference type="PANTHER" id="PTHR45777">
    <property type="entry name" value="METHIONINE AMINOPEPTIDASE 2"/>
    <property type="match status" value="1"/>
</dbReference>
<dbReference type="PANTHER" id="PTHR45777:SF2">
    <property type="entry name" value="METHIONINE AMINOPEPTIDASE 2"/>
    <property type="match status" value="1"/>
</dbReference>
<dbReference type="Pfam" id="PF00557">
    <property type="entry name" value="Peptidase_M24"/>
    <property type="match status" value="1"/>
</dbReference>
<dbReference type="PRINTS" id="PR00599">
    <property type="entry name" value="MAPEPTIDASE"/>
</dbReference>
<dbReference type="SUPFAM" id="SSF55920">
    <property type="entry name" value="Creatinase/aminopeptidase"/>
    <property type="match status" value="1"/>
</dbReference>
<dbReference type="SUPFAM" id="SSF46785">
    <property type="entry name" value="Winged helix' DNA-binding domain"/>
    <property type="match status" value="1"/>
</dbReference>
<dbReference type="PROSITE" id="PS01202">
    <property type="entry name" value="MAP_2"/>
    <property type="match status" value="1"/>
</dbReference>
<feature type="chain" id="PRO_0000407597" description="Methionine aminopeptidase 2-2">
    <location>
        <begin position="1"/>
        <end position="447"/>
    </location>
</feature>
<feature type="region of interest" description="Disordered" evidence="2">
    <location>
        <begin position="1"/>
        <end position="89"/>
    </location>
</feature>
<feature type="compositionally biased region" description="Polar residues" evidence="2">
    <location>
        <begin position="15"/>
        <end position="30"/>
    </location>
</feature>
<feature type="compositionally biased region" description="Acidic residues" evidence="2">
    <location>
        <begin position="34"/>
        <end position="47"/>
    </location>
</feature>
<feature type="compositionally biased region" description="Basic residues" evidence="2">
    <location>
        <begin position="59"/>
        <end position="73"/>
    </location>
</feature>
<feature type="binding site" evidence="1">
    <location>
        <position position="197"/>
    </location>
    <ligand>
        <name>substrate</name>
    </ligand>
</feature>
<feature type="binding site" evidence="1">
    <location>
        <position position="217"/>
    </location>
    <ligand>
        <name>a divalent metal cation</name>
        <dbReference type="ChEBI" id="CHEBI:60240"/>
        <label>1</label>
    </ligand>
</feature>
<feature type="binding site" evidence="1">
    <location>
        <position position="228"/>
    </location>
    <ligand>
        <name>a divalent metal cation</name>
        <dbReference type="ChEBI" id="CHEBI:60240"/>
        <label>1</label>
    </ligand>
</feature>
<feature type="binding site" evidence="1">
    <location>
        <position position="228"/>
    </location>
    <ligand>
        <name>a divalent metal cation</name>
        <dbReference type="ChEBI" id="CHEBI:60240"/>
        <label>2</label>
        <note>catalytic</note>
    </ligand>
</feature>
<feature type="binding site" evidence="1">
    <location>
        <position position="297"/>
    </location>
    <ligand>
        <name>a divalent metal cation</name>
        <dbReference type="ChEBI" id="CHEBI:60240"/>
        <label>2</label>
        <note>catalytic</note>
    </ligand>
</feature>
<feature type="binding site" evidence="1">
    <location>
        <position position="305"/>
    </location>
    <ligand>
        <name>substrate</name>
    </ligand>
</feature>
<feature type="binding site" evidence="1">
    <location>
        <position position="333"/>
    </location>
    <ligand>
        <name>a divalent metal cation</name>
        <dbReference type="ChEBI" id="CHEBI:60240"/>
        <label>2</label>
        <note>catalytic</note>
    </ligand>
</feature>
<feature type="binding site" evidence="1">
    <location>
        <position position="428"/>
    </location>
    <ligand>
        <name>a divalent metal cation</name>
        <dbReference type="ChEBI" id="CHEBI:60240"/>
        <label>1</label>
    </ligand>
</feature>
<feature type="binding site" evidence="1">
    <location>
        <position position="428"/>
    </location>
    <ligand>
        <name>a divalent metal cation</name>
        <dbReference type="ChEBI" id="CHEBI:60240"/>
        <label>2</label>
        <note>catalytic</note>
    </ligand>
</feature>
<organism>
    <name type="scientific">Arthroderma otae (strain ATCC MYA-4605 / CBS 113480)</name>
    <name type="common">Microsporum canis</name>
    <dbReference type="NCBI Taxonomy" id="554155"/>
    <lineage>
        <taxon>Eukaryota</taxon>
        <taxon>Fungi</taxon>
        <taxon>Dikarya</taxon>
        <taxon>Ascomycota</taxon>
        <taxon>Pezizomycotina</taxon>
        <taxon>Eurotiomycetes</taxon>
        <taxon>Eurotiomycetidae</taxon>
        <taxon>Onygenales</taxon>
        <taxon>Arthrodermataceae</taxon>
        <taxon>Microsporum</taxon>
    </lineage>
</organism>
<gene>
    <name type="ORF">MCYG_01318</name>
</gene>
<proteinExistence type="inferred from homology"/>
<protein>
    <recommendedName>
        <fullName evidence="1">Methionine aminopeptidase 2-2</fullName>
        <shortName evidence="1">MAP 2-2</shortName>
        <shortName evidence="1">MetAP 2-2</shortName>
        <ecNumber evidence="1">3.4.11.18</ecNumber>
    </recommendedName>
    <alternativeName>
        <fullName evidence="1">Peptidase M</fullName>
    </alternativeName>
</protein>
<accession>C5FF46</accession>
<name>MAP22_ARTOC</name>
<keyword id="KW-0031">Aminopeptidase</keyword>
<keyword id="KW-0963">Cytoplasm</keyword>
<keyword id="KW-0378">Hydrolase</keyword>
<keyword id="KW-0479">Metal-binding</keyword>
<keyword id="KW-0645">Protease</keyword>
<keyword id="KW-1185">Reference proteome</keyword>
<sequence>MAAQTAPELAKLDLNKNSGSAEANVVSNGGSDKDDAENEGDSDDDKDEAGGSAEVNTEKKKKKKRSKKKKKAAKVQSSPPRIPLTTLFPNNAFPEGEIVEYLNDNSYRTTNEEKRHLDRMNNDFLTEYRQAAEIHRQVRQYAQKELIKPGATLTDIAEGIEDGVRHLTGHMGLEEGDSLIAGMGFPTGLNINHCAAHYSPNAGNKVVLQHGDVMKVDFGVHVNGRIVDSAFTVAFDPVFDPLLTAVKEATNTGIKEAGIDVRMSDIGAAIQETMESYELEINGTSYPIKAVRNLNGHTIGQYEIHGGVNGKSVPIVKGGDQTKMEEGETYAIETFGSTGKGYVRDDMETSHYAKVPNAPSVPLRLSSAKNLYSLINKNFGTLPFCRRYLDRLGQEKYLLGLNNLVSSGLVDAYPPLCDVKGSYTAQFEHTILLRPNVKEVISRGDDY</sequence>
<reference key="1">
    <citation type="journal article" date="2012" name="MBio">
        <title>Comparative genome analysis of Trichophyton rubrum and related dermatophytes reveals candidate genes involved in infection.</title>
        <authorList>
            <person name="Martinez D.A."/>
            <person name="Oliver B.G."/>
            <person name="Graeser Y."/>
            <person name="Goldberg J.M."/>
            <person name="Li W."/>
            <person name="Martinez-Rossi N.M."/>
            <person name="Monod M."/>
            <person name="Shelest E."/>
            <person name="Barton R.C."/>
            <person name="Birch E."/>
            <person name="Brakhage A.A."/>
            <person name="Chen Z."/>
            <person name="Gurr S.J."/>
            <person name="Heiman D."/>
            <person name="Heitman J."/>
            <person name="Kosti I."/>
            <person name="Rossi A."/>
            <person name="Saif S."/>
            <person name="Samalova M."/>
            <person name="Saunders C.W."/>
            <person name="Shea T."/>
            <person name="Summerbell R.C."/>
            <person name="Xu J."/>
            <person name="Young S."/>
            <person name="Zeng Q."/>
            <person name="Birren B.W."/>
            <person name="Cuomo C.A."/>
            <person name="White T.C."/>
        </authorList>
    </citation>
    <scope>NUCLEOTIDE SEQUENCE [LARGE SCALE GENOMIC DNA]</scope>
    <source>
        <strain>ATCC MYA-4605 / CBS 113480</strain>
    </source>
</reference>
<comment type="function">
    <text evidence="1">Cotranslationally removes the N-terminal methionine from nascent proteins. The N-terminal methionine is often cleaved when the second residue in the primary sequence is small and uncharged (Met-Ala-, Cys, Gly, Pro, Ser, Thr, or Val).</text>
</comment>
<comment type="catalytic activity">
    <reaction evidence="1">
        <text>Release of N-terminal amino acids, preferentially methionine, from peptides and arylamides.</text>
        <dbReference type="EC" id="3.4.11.18"/>
    </reaction>
</comment>
<comment type="cofactor">
    <cofactor evidence="1">
        <name>Co(2+)</name>
        <dbReference type="ChEBI" id="CHEBI:48828"/>
    </cofactor>
    <cofactor evidence="1">
        <name>Zn(2+)</name>
        <dbReference type="ChEBI" id="CHEBI:29105"/>
    </cofactor>
    <cofactor evidence="1">
        <name>Mn(2+)</name>
        <dbReference type="ChEBI" id="CHEBI:29035"/>
    </cofactor>
    <cofactor evidence="1">
        <name>Fe(2+)</name>
        <dbReference type="ChEBI" id="CHEBI:29033"/>
    </cofactor>
    <text evidence="1">Binds 2 divalent metal cations per subunit. Has a high-affinity and a low affinity metal-binding site. The true nature of the physiological cofactor is under debate. The enzyme is active with cobalt, zinc, manganese or divalent iron ions. Most likely, methionine aminopeptidases function as mononuclear Fe(2+)-metalloproteases under physiological conditions, and the catalytically relevant metal-binding site has been assigned to the histidine-containing high-affinity site.</text>
</comment>
<comment type="subcellular location">
    <subcellularLocation>
        <location evidence="1">Cytoplasm</location>
    </subcellularLocation>
</comment>
<comment type="similarity">
    <text evidence="1">Belongs to the peptidase M24A family. Methionine aminopeptidase eukaryotic type 2 subfamily.</text>
</comment>
<evidence type="ECO:0000255" key="1">
    <source>
        <dbReference type="HAMAP-Rule" id="MF_03175"/>
    </source>
</evidence>
<evidence type="ECO:0000256" key="2">
    <source>
        <dbReference type="SAM" id="MobiDB-lite"/>
    </source>
</evidence>